<name>DLGD_SALEP</name>
<reference key="1">
    <citation type="journal article" date="2008" name="Genome Res.">
        <title>Comparative genome analysis of Salmonella enteritidis PT4 and Salmonella gallinarum 287/91 provides insights into evolutionary and host adaptation pathways.</title>
        <authorList>
            <person name="Thomson N.R."/>
            <person name="Clayton D.J."/>
            <person name="Windhorst D."/>
            <person name="Vernikos G."/>
            <person name="Davidson S."/>
            <person name="Churcher C."/>
            <person name="Quail M.A."/>
            <person name="Stevens M."/>
            <person name="Jones M.A."/>
            <person name="Watson M."/>
            <person name="Barron A."/>
            <person name="Layton A."/>
            <person name="Pickard D."/>
            <person name="Kingsley R.A."/>
            <person name="Bignell A."/>
            <person name="Clark L."/>
            <person name="Harris B."/>
            <person name="Ormond D."/>
            <person name="Abdellah Z."/>
            <person name="Brooks K."/>
            <person name="Cherevach I."/>
            <person name="Chillingworth T."/>
            <person name="Woodward J."/>
            <person name="Norberczak H."/>
            <person name="Lord A."/>
            <person name="Arrowsmith C."/>
            <person name="Jagels K."/>
            <person name="Moule S."/>
            <person name="Mungall K."/>
            <person name="Saunders M."/>
            <person name="Whitehead S."/>
            <person name="Chabalgoity J.A."/>
            <person name="Maskell D."/>
            <person name="Humphreys T."/>
            <person name="Roberts M."/>
            <person name="Barrow P.A."/>
            <person name="Dougan G."/>
            <person name="Parkhill J."/>
        </authorList>
    </citation>
    <scope>NUCLEOTIDE SEQUENCE [LARGE SCALE GENOMIC DNA]</scope>
    <source>
        <strain>P125109</strain>
    </source>
</reference>
<accession>B5R4Q5</accession>
<evidence type="ECO:0000255" key="1">
    <source>
        <dbReference type="HAMAP-Rule" id="MF_00820"/>
    </source>
</evidence>
<comment type="function">
    <text evidence="1">Catalyzes the reduction of 2,3-diketo-L-gulonate in the presence of NADH, to form 3-keto-L-gulonate.</text>
</comment>
<comment type="catalytic activity">
    <reaction evidence="1">
        <text>3-dehydro-L-gulonate + NAD(+) = 2,3-dioxo-L-gulonate + NADH + H(+)</text>
        <dbReference type="Rhea" id="RHEA:21924"/>
        <dbReference type="ChEBI" id="CHEBI:15378"/>
        <dbReference type="ChEBI" id="CHEBI:57441"/>
        <dbReference type="ChEBI" id="CHEBI:57540"/>
        <dbReference type="ChEBI" id="CHEBI:57655"/>
        <dbReference type="ChEBI" id="CHEBI:57945"/>
        <dbReference type="EC" id="1.1.1.130"/>
    </reaction>
</comment>
<comment type="catalytic activity">
    <reaction evidence="1">
        <text>3-dehydro-L-gulonate + NADP(+) = 2,3-dioxo-L-gulonate + NADPH + H(+)</text>
        <dbReference type="Rhea" id="RHEA:21928"/>
        <dbReference type="ChEBI" id="CHEBI:15378"/>
        <dbReference type="ChEBI" id="CHEBI:57441"/>
        <dbReference type="ChEBI" id="CHEBI:57655"/>
        <dbReference type="ChEBI" id="CHEBI:57783"/>
        <dbReference type="ChEBI" id="CHEBI:58349"/>
        <dbReference type="EC" id="1.1.1.130"/>
    </reaction>
</comment>
<comment type="subunit">
    <text evidence="1">Homodimer.</text>
</comment>
<comment type="subcellular location">
    <subcellularLocation>
        <location evidence="1">Cytoplasm</location>
    </subcellularLocation>
</comment>
<comment type="similarity">
    <text evidence="1">Belongs to the LDH2/MDH2 oxidoreductase family. DlgD subfamily.</text>
</comment>
<organism>
    <name type="scientific">Salmonella enteritidis PT4 (strain P125109)</name>
    <dbReference type="NCBI Taxonomy" id="550537"/>
    <lineage>
        <taxon>Bacteria</taxon>
        <taxon>Pseudomonadati</taxon>
        <taxon>Pseudomonadota</taxon>
        <taxon>Gammaproteobacteria</taxon>
        <taxon>Enterobacterales</taxon>
        <taxon>Enterobacteriaceae</taxon>
        <taxon>Salmonella</taxon>
    </lineage>
</organism>
<sequence length="332" mass="36713">MKVTFEELKGAFYRVLRSRNIAEDTADACAEMFARTTESGVYSHGVNRFPRFIQQLDNGDIIPDAKPQRVTSLGAIEQWDAQRAIGNLTAKKMMDRAIELASDHGIGLVALRNANHWMRGGSYGWQAAEKGYIGICWTNSIAVMPPWGAKECRIGTNPLIVAIPSTPITMVDMSMSMFSYGMLEVNRLAGRELPVDGGFDDNGQLTKEPGVIEKNRRILPMGYWKGSGLSIVLDMIATLLSNGSSVAEVTQENSDEYGVSQIFIAIEVDKLIDGATRDAKLQRIMDFITTAERADDNVAIRLPGHEFTKLLDDNRRHGITIDDSVWAKIQAL</sequence>
<keyword id="KW-0963">Cytoplasm</keyword>
<keyword id="KW-0520">NAD</keyword>
<keyword id="KW-0560">Oxidoreductase</keyword>
<protein>
    <recommendedName>
        <fullName evidence="1">2,3-diketo-L-gulonate reductase</fullName>
        <shortName evidence="1">2,3-DKG reductase</shortName>
        <ecNumber evidence="1">1.1.1.130</ecNumber>
    </recommendedName>
    <alternativeName>
        <fullName evidence="1">3-dehydro-L-gulonate 2-dehydrogenase</fullName>
    </alternativeName>
</protein>
<feature type="chain" id="PRO_1000134348" description="2,3-diketo-L-gulonate reductase">
    <location>
        <begin position="1"/>
        <end position="332"/>
    </location>
</feature>
<feature type="active site" description="Proton donor" evidence="1">
    <location>
        <position position="44"/>
    </location>
</feature>
<feature type="binding site" evidence="1">
    <location>
        <begin position="168"/>
        <end position="174"/>
    </location>
    <ligand>
        <name>NAD(+)</name>
        <dbReference type="ChEBI" id="CHEBI:57540"/>
    </ligand>
</feature>
<feature type="binding site" evidence="1">
    <location>
        <begin position="224"/>
        <end position="225"/>
    </location>
    <ligand>
        <name>NAD(+)</name>
        <dbReference type="ChEBI" id="CHEBI:57540"/>
    </ligand>
</feature>
<feature type="binding site" evidence="1">
    <location>
        <begin position="304"/>
        <end position="306"/>
    </location>
    <ligand>
        <name>NAD(+)</name>
        <dbReference type="ChEBI" id="CHEBI:57540"/>
    </ligand>
</feature>
<gene>
    <name evidence="1" type="primary">dlgD</name>
    <name type="ordered locus">SEN3490</name>
</gene>
<proteinExistence type="inferred from homology"/>
<dbReference type="EC" id="1.1.1.130" evidence="1"/>
<dbReference type="EMBL" id="AM933172">
    <property type="protein sequence ID" value="CAR35069.1"/>
    <property type="molecule type" value="Genomic_DNA"/>
</dbReference>
<dbReference type="SMR" id="B5R4Q5"/>
<dbReference type="KEGG" id="set:SEN3490"/>
<dbReference type="HOGENOM" id="CLU_040452_4_0_6"/>
<dbReference type="Proteomes" id="UP000000613">
    <property type="component" value="Chromosome"/>
</dbReference>
<dbReference type="GO" id="GO:0005737">
    <property type="term" value="C:cytoplasm"/>
    <property type="evidence" value="ECO:0007669"/>
    <property type="project" value="UniProtKB-SubCell"/>
</dbReference>
<dbReference type="GO" id="GO:0047559">
    <property type="term" value="F:3-dehydro-L-gulonate 2-dehydrogenase activity"/>
    <property type="evidence" value="ECO:0007669"/>
    <property type="project" value="UniProtKB-UniRule"/>
</dbReference>
<dbReference type="GO" id="GO:0070403">
    <property type="term" value="F:NAD+ binding"/>
    <property type="evidence" value="ECO:0007669"/>
    <property type="project" value="InterPro"/>
</dbReference>
<dbReference type="Gene3D" id="1.10.1530.10">
    <property type="match status" value="1"/>
</dbReference>
<dbReference type="Gene3D" id="3.30.1370.60">
    <property type="entry name" value="Hypothetical oxidoreductase yiak, domain 2"/>
    <property type="match status" value="1"/>
</dbReference>
<dbReference type="Gene3D" id="3.30.60.50">
    <property type="entry name" value="Hypothetical oxidoreductase yiak, domain 3"/>
    <property type="match status" value="1"/>
</dbReference>
<dbReference type="HAMAP" id="MF_00820">
    <property type="entry name" value="Diketo_gul_reduc"/>
    <property type="match status" value="1"/>
</dbReference>
<dbReference type="InterPro" id="IPR023689">
    <property type="entry name" value="Diketo_gul_Rdtase"/>
</dbReference>
<dbReference type="InterPro" id="IPR043144">
    <property type="entry name" value="Mal/L-sulf/L-lact_DH-like_ah"/>
</dbReference>
<dbReference type="InterPro" id="IPR043143">
    <property type="entry name" value="Mal/L-sulf/L-lact_DH-like_NADP"/>
</dbReference>
<dbReference type="InterPro" id="IPR036111">
    <property type="entry name" value="Mal/L-sulfo/L-lacto_DH-like_sf"/>
</dbReference>
<dbReference type="InterPro" id="IPR003767">
    <property type="entry name" value="Malate/L-lactate_DH-like"/>
</dbReference>
<dbReference type="NCBIfam" id="NF009750">
    <property type="entry name" value="PRK13260.1"/>
    <property type="match status" value="1"/>
</dbReference>
<dbReference type="PANTHER" id="PTHR11091:SF3">
    <property type="entry name" value="2,3-DIKETO-L-GULONATE REDUCTASE"/>
    <property type="match status" value="1"/>
</dbReference>
<dbReference type="PANTHER" id="PTHR11091">
    <property type="entry name" value="OXIDOREDUCTASE-RELATED"/>
    <property type="match status" value="1"/>
</dbReference>
<dbReference type="Pfam" id="PF02615">
    <property type="entry name" value="Ldh_2"/>
    <property type="match status" value="1"/>
</dbReference>
<dbReference type="SUPFAM" id="SSF89733">
    <property type="entry name" value="L-sulfolactate dehydrogenase-like"/>
    <property type="match status" value="1"/>
</dbReference>